<accession>Q7J191</accession>
<feature type="chain" id="PRO_0000217940" description="Photosystem II reaction center protein T">
    <location>
        <begin position="1"/>
        <end position="35"/>
    </location>
</feature>
<feature type="transmembrane region" description="Helical" evidence="1">
    <location>
        <begin position="3"/>
        <end position="23"/>
    </location>
</feature>
<evidence type="ECO:0000255" key="1">
    <source>
        <dbReference type="HAMAP-Rule" id="MF_00808"/>
    </source>
</evidence>
<protein>
    <recommendedName>
        <fullName evidence="1">Photosystem II reaction center protein T</fullName>
        <shortName evidence="1">PSII-T</shortName>
    </recommendedName>
</protein>
<organism>
    <name type="scientific">Illicium parviflorum</name>
    <name type="common">Yellow anise tree</name>
    <name type="synonym">Badianifera parviflora</name>
    <dbReference type="NCBI Taxonomy" id="13099"/>
    <lineage>
        <taxon>Eukaryota</taxon>
        <taxon>Viridiplantae</taxon>
        <taxon>Streptophyta</taxon>
        <taxon>Embryophyta</taxon>
        <taxon>Tracheophyta</taxon>
        <taxon>Spermatophyta</taxon>
        <taxon>Magnoliopsida</taxon>
        <taxon>Austrobaileyales</taxon>
        <taxon>Schisandraceae</taxon>
        <taxon>Illicium</taxon>
    </lineage>
</organism>
<proteinExistence type="inferred from homology"/>
<gene>
    <name evidence="1" type="primary">psbT</name>
</gene>
<keyword id="KW-0150">Chloroplast</keyword>
<keyword id="KW-0472">Membrane</keyword>
<keyword id="KW-0602">Photosynthesis</keyword>
<keyword id="KW-0604">Photosystem II</keyword>
<keyword id="KW-0934">Plastid</keyword>
<keyword id="KW-0793">Thylakoid</keyword>
<keyword id="KW-0812">Transmembrane</keyword>
<keyword id="KW-1133">Transmembrane helix</keyword>
<dbReference type="EMBL" id="AF123853">
    <property type="protein sequence ID" value="AAG26290.1"/>
    <property type="molecule type" value="Genomic_DNA"/>
</dbReference>
<dbReference type="SMR" id="Q7J191"/>
<dbReference type="GO" id="GO:0009535">
    <property type="term" value="C:chloroplast thylakoid membrane"/>
    <property type="evidence" value="ECO:0007669"/>
    <property type="project" value="UniProtKB-SubCell"/>
</dbReference>
<dbReference type="GO" id="GO:0009539">
    <property type="term" value="C:photosystem II reaction center"/>
    <property type="evidence" value="ECO:0007669"/>
    <property type="project" value="InterPro"/>
</dbReference>
<dbReference type="GO" id="GO:0015979">
    <property type="term" value="P:photosynthesis"/>
    <property type="evidence" value="ECO:0007669"/>
    <property type="project" value="UniProtKB-UniRule"/>
</dbReference>
<dbReference type="HAMAP" id="MF_00808">
    <property type="entry name" value="PSII_PsbT"/>
    <property type="match status" value="1"/>
</dbReference>
<dbReference type="InterPro" id="IPR001743">
    <property type="entry name" value="PSII_PsbT"/>
</dbReference>
<dbReference type="InterPro" id="IPR037268">
    <property type="entry name" value="PSII_PsbT_sf"/>
</dbReference>
<dbReference type="PANTHER" id="PTHR36411">
    <property type="match status" value="1"/>
</dbReference>
<dbReference type="PANTHER" id="PTHR36411:SF2">
    <property type="entry name" value="PHOTOSYSTEM II REACTION CENTER PROTEIN T"/>
    <property type="match status" value="1"/>
</dbReference>
<dbReference type="Pfam" id="PF01405">
    <property type="entry name" value="PsbT"/>
    <property type="match status" value="1"/>
</dbReference>
<dbReference type="SUPFAM" id="SSF161029">
    <property type="entry name" value="Photosystem II reaction center protein T, PsbT"/>
    <property type="match status" value="1"/>
</dbReference>
<comment type="function">
    <text evidence="1">Found at the monomer-monomer interface of the photosystem II (PS II) dimer, plays a role in assembly and dimerization of PSII. PSII is a light-driven water plastoquinone oxidoreductase, using light energy to abstract electrons from H(2)O, generating a proton gradient subsequently used for ATP formation.</text>
</comment>
<comment type="subunit">
    <text evidence="1">PSII is composed of 1 copy each of membrane proteins PsbA, PsbB, PsbC, PsbD, PsbE, PsbF, PsbH, PsbI, PsbJ, PsbK, PsbL, PsbM, PsbT, PsbY, PsbZ, Psb30/Ycf12, at least 3 peripheral proteins of the oxygen-evolving complex and a large number of cofactors. It forms dimeric complexes.</text>
</comment>
<comment type="subcellular location">
    <subcellularLocation>
        <location evidence="1">Plastid</location>
        <location evidence="1">Chloroplast thylakoid membrane</location>
        <topology evidence="1">Single-pass membrane protein</topology>
    </subcellularLocation>
</comment>
<comment type="similarity">
    <text evidence="1">Belongs to the PsbT family.</text>
</comment>
<reference key="1">
    <citation type="journal article" date="2000" name="Am. J. Bot.">
        <title>Utility of 17 chloroplast genes for inferring the phylogeny of the basal angiosperms.</title>
        <authorList>
            <person name="Graham S.W."/>
            <person name="Olmstead R.G."/>
        </authorList>
    </citation>
    <scope>NUCLEOTIDE SEQUENCE [GENOMIC DNA]</scope>
</reference>
<name>PSBT_ILLPA</name>
<sequence length="35" mass="4090">MEALVYTFLLVSTLGIIFFAIFFREPPKVPNKKMK</sequence>
<geneLocation type="chloroplast"/>